<sequence>MQDLLNQILDEVRPLIGQGQVANYIPALADVPANQLGIAVYGNDGQVFSAGDADTPFSVQSISKVFSLVQAIGHSGEAIWERLGHEPSGQPFNSLVQLEFERGRPRNPFINAGALVICDINQSRFAAPALSMRDFVRRLSGNLQVMVDGRVAESEYQHRARNAAMAYLMQSFGNFHNDVEAVLRSYFSHCALRMSCVDLARAFCFLANDGFCKHSGEQILTRRQTQQVNSIMATSGLYDEAGNFAYRVGLPGKSGVGGGIVAVVPGQFTVCVWSPELNSAGNSLVGMAALELLSQRIGWSVF</sequence>
<dbReference type="EC" id="3.5.1.2" evidence="1"/>
<dbReference type="EMBL" id="CP000076">
    <property type="protein sequence ID" value="AAY92429.2"/>
    <property type="molecule type" value="Genomic_DNA"/>
</dbReference>
<dbReference type="SMR" id="Q4KBW8"/>
<dbReference type="STRING" id="220664.PFL_3159"/>
<dbReference type="KEGG" id="pfl:PFL_3159"/>
<dbReference type="PATRIC" id="fig|220664.5.peg.3222"/>
<dbReference type="eggNOG" id="COG2066">
    <property type="taxonomic scope" value="Bacteria"/>
</dbReference>
<dbReference type="HOGENOM" id="CLU_027932_1_1_6"/>
<dbReference type="Proteomes" id="UP000008540">
    <property type="component" value="Chromosome"/>
</dbReference>
<dbReference type="GO" id="GO:0004359">
    <property type="term" value="F:glutaminase activity"/>
    <property type="evidence" value="ECO:0007669"/>
    <property type="project" value="UniProtKB-UniRule"/>
</dbReference>
<dbReference type="GO" id="GO:0006537">
    <property type="term" value="P:glutamate biosynthetic process"/>
    <property type="evidence" value="ECO:0007669"/>
    <property type="project" value="TreeGrafter"/>
</dbReference>
<dbReference type="GO" id="GO:0006543">
    <property type="term" value="P:glutamine catabolic process"/>
    <property type="evidence" value="ECO:0007669"/>
    <property type="project" value="TreeGrafter"/>
</dbReference>
<dbReference type="FunFam" id="3.40.710.10:FF:000005">
    <property type="entry name" value="Glutaminase"/>
    <property type="match status" value="1"/>
</dbReference>
<dbReference type="Gene3D" id="3.40.710.10">
    <property type="entry name" value="DD-peptidase/beta-lactamase superfamily"/>
    <property type="match status" value="1"/>
</dbReference>
<dbReference type="HAMAP" id="MF_00313">
    <property type="entry name" value="Glutaminase"/>
    <property type="match status" value="1"/>
</dbReference>
<dbReference type="InterPro" id="IPR012338">
    <property type="entry name" value="Beta-lactam/transpept-like"/>
</dbReference>
<dbReference type="InterPro" id="IPR015868">
    <property type="entry name" value="Glutaminase"/>
</dbReference>
<dbReference type="NCBIfam" id="TIGR03814">
    <property type="entry name" value="Gln_ase"/>
    <property type="match status" value="1"/>
</dbReference>
<dbReference type="NCBIfam" id="NF002132">
    <property type="entry name" value="PRK00971.1-1"/>
    <property type="match status" value="1"/>
</dbReference>
<dbReference type="NCBIfam" id="NF002133">
    <property type="entry name" value="PRK00971.1-2"/>
    <property type="match status" value="1"/>
</dbReference>
<dbReference type="PANTHER" id="PTHR12544">
    <property type="entry name" value="GLUTAMINASE"/>
    <property type="match status" value="1"/>
</dbReference>
<dbReference type="PANTHER" id="PTHR12544:SF29">
    <property type="entry name" value="GLUTAMINASE"/>
    <property type="match status" value="1"/>
</dbReference>
<dbReference type="Pfam" id="PF04960">
    <property type="entry name" value="Glutaminase"/>
    <property type="match status" value="1"/>
</dbReference>
<dbReference type="SUPFAM" id="SSF56601">
    <property type="entry name" value="beta-lactamase/transpeptidase-like"/>
    <property type="match status" value="1"/>
</dbReference>
<gene>
    <name evidence="1" type="primary">glsA</name>
    <name type="ordered locus">PFL_3159</name>
</gene>
<reference key="1">
    <citation type="journal article" date="2005" name="Nat. Biotechnol.">
        <title>Complete genome sequence of the plant commensal Pseudomonas fluorescens Pf-5.</title>
        <authorList>
            <person name="Paulsen I.T."/>
            <person name="Press C.M."/>
            <person name="Ravel J."/>
            <person name="Kobayashi D.Y."/>
            <person name="Myers G.S.A."/>
            <person name="Mavrodi D.V."/>
            <person name="DeBoy R.T."/>
            <person name="Seshadri R."/>
            <person name="Ren Q."/>
            <person name="Madupu R."/>
            <person name="Dodson R.J."/>
            <person name="Durkin A.S."/>
            <person name="Brinkac L.M."/>
            <person name="Daugherty S.C."/>
            <person name="Sullivan S.A."/>
            <person name="Rosovitz M.J."/>
            <person name="Gwinn M.L."/>
            <person name="Zhou L."/>
            <person name="Schneider D.J."/>
            <person name="Cartinhour S.W."/>
            <person name="Nelson W.C."/>
            <person name="Weidman J."/>
            <person name="Watkins K."/>
            <person name="Tran K."/>
            <person name="Khouri H."/>
            <person name="Pierson E.A."/>
            <person name="Pierson L.S. III"/>
            <person name="Thomashow L.S."/>
            <person name="Loper J.E."/>
        </authorList>
    </citation>
    <scope>NUCLEOTIDE SEQUENCE [LARGE SCALE GENOMIC DNA]</scope>
    <source>
        <strain>ATCC BAA-477 / NRRL B-23932 / Pf-5</strain>
    </source>
</reference>
<protein>
    <recommendedName>
        <fullName evidence="1">Glutaminase</fullName>
        <ecNumber evidence="1">3.5.1.2</ecNumber>
    </recommendedName>
</protein>
<accession>Q4KBW8</accession>
<comment type="catalytic activity">
    <reaction evidence="1">
        <text>L-glutamine + H2O = L-glutamate + NH4(+)</text>
        <dbReference type="Rhea" id="RHEA:15889"/>
        <dbReference type="ChEBI" id="CHEBI:15377"/>
        <dbReference type="ChEBI" id="CHEBI:28938"/>
        <dbReference type="ChEBI" id="CHEBI:29985"/>
        <dbReference type="ChEBI" id="CHEBI:58359"/>
        <dbReference type="EC" id="3.5.1.2"/>
    </reaction>
</comment>
<comment type="subunit">
    <text evidence="1">Homotetramer.</text>
</comment>
<comment type="similarity">
    <text evidence="1">Belongs to the glutaminase family.</text>
</comment>
<keyword id="KW-0378">Hydrolase</keyword>
<feature type="chain" id="PRO_0000336036" description="Glutaminase">
    <location>
        <begin position="1"/>
        <end position="302"/>
    </location>
</feature>
<feature type="binding site" evidence="1">
    <location>
        <position position="61"/>
    </location>
    <ligand>
        <name>substrate</name>
    </ligand>
</feature>
<feature type="binding site" evidence="1">
    <location>
        <position position="111"/>
    </location>
    <ligand>
        <name>substrate</name>
    </ligand>
</feature>
<feature type="binding site" evidence="1">
    <location>
        <position position="155"/>
    </location>
    <ligand>
        <name>substrate</name>
    </ligand>
</feature>
<feature type="binding site" evidence="1">
    <location>
        <position position="162"/>
    </location>
    <ligand>
        <name>substrate</name>
    </ligand>
</feature>
<feature type="binding site" evidence="1">
    <location>
        <position position="186"/>
    </location>
    <ligand>
        <name>substrate</name>
    </ligand>
</feature>
<feature type="binding site" evidence="1">
    <location>
        <position position="238"/>
    </location>
    <ligand>
        <name>substrate</name>
    </ligand>
</feature>
<feature type="binding site" evidence="1">
    <location>
        <position position="256"/>
    </location>
    <ligand>
        <name>substrate</name>
    </ligand>
</feature>
<organism>
    <name type="scientific">Pseudomonas fluorescens (strain ATCC BAA-477 / NRRL B-23932 / Pf-5)</name>
    <dbReference type="NCBI Taxonomy" id="220664"/>
    <lineage>
        <taxon>Bacteria</taxon>
        <taxon>Pseudomonadati</taxon>
        <taxon>Pseudomonadota</taxon>
        <taxon>Gammaproteobacteria</taxon>
        <taxon>Pseudomonadales</taxon>
        <taxon>Pseudomonadaceae</taxon>
        <taxon>Pseudomonas</taxon>
    </lineage>
</organism>
<name>GLSA_PSEF5</name>
<evidence type="ECO:0000255" key="1">
    <source>
        <dbReference type="HAMAP-Rule" id="MF_00313"/>
    </source>
</evidence>
<proteinExistence type="inferred from homology"/>